<keyword id="KW-0150">Chloroplast</keyword>
<keyword id="KW-0934">Plastid</keyword>
<keyword id="KW-1185">Reference proteome</keyword>
<keyword id="KW-0687">Ribonucleoprotein</keyword>
<keyword id="KW-0689">Ribosomal protein</keyword>
<organism>
    <name type="scientific">Nicotiana sylvestris</name>
    <name type="common">Wood tobacco</name>
    <name type="synonym">South American tobacco</name>
    <dbReference type="NCBI Taxonomy" id="4096"/>
    <lineage>
        <taxon>Eukaryota</taxon>
        <taxon>Viridiplantae</taxon>
        <taxon>Streptophyta</taxon>
        <taxon>Embryophyta</taxon>
        <taxon>Tracheophyta</taxon>
        <taxon>Spermatophyta</taxon>
        <taxon>Magnoliopsida</taxon>
        <taxon>eudicotyledons</taxon>
        <taxon>Gunneridae</taxon>
        <taxon>Pentapetalae</taxon>
        <taxon>asterids</taxon>
        <taxon>lamiids</taxon>
        <taxon>Solanales</taxon>
        <taxon>Solanaceae</taxon>
        <taxon>Nicotianoideae</taxon>
        <taxon>Nicotianeae</taxon>
        <taxon>Nicotiana</taxon>
    </lineage>
</organism>
<reference key="1">
    <citation type="journal article" date="2006" name="Mol. Genet. Genomics">
        <title>The chloroplast genome of Nicotiana sylvestris and Nicotiana tomentosiformis: complete sequencing confirms that the Nicotiana sylvestris progenitor is the maternal genome donor of Nicotiana tabacum.</title>
        <authorList>
            <person name="Yukawa M."/>
            <person name="Tsudzuki T."/>
            <person name="Sugiura M."/>
        </authorList>
    </citation>
    <scope>NUCLEOTIDE SEQUENCE [LARGE SCALE GENOMIC DNA]</scope>
</reference>
<evidence type="ECO:0000250" key="1"/>
<evidence type="ECO:0000255" key="2">
    <source>
        <dbReference type="HAMAP-Rule" id="MF_01320"/>
    </source>
</evidence>
<evidence type="ECO:0000256" key="3">
    <source>
        <dbReference type="SAM" id="MobiDB-lite"/>
    </source>
</evidence>
<evidence type="ECO:0000305" key="4"/>
<dbReference type="EMBL" id="AB237912">
    <property type="protein sequence ID" value="BAE46696.1"/>
    <property type="molecule type" value="Genomic_DNA"/>
</dbReference>
<dbReference type="EMBL" id="AB237912">
    <property type="protein sequence ID" value="BAE46735.1"/>
    <property type="molecule type" value="Genomic_DNA"/>
</dbReference>
<dbReference type="SMR" id="Q3C1N6"/>
<dbReference type="KEGG" id="nsy:3735080"/>
<dbReference type="KEGG" id="nsy:3735081"/>
<dbReference type="OrthoDB" id="32128at4085"/>
<dbReference type="Proteomes" id="UP000189701">
    <property type="component" value="Unplaced"/>
</dbReference>
<dbReference type="GO" id="GO:0009507">
    <property type="term" value="C:chloroplast"/>
    <property type="evidence" value="ECO:0007669"/>
    <property type="project" value="UniProtKB-SubCell"/>
</dbReference>
<dbReference type="GO" id="GO:0005762">
    <property type="term" value="C:mitochondrial large ribosomal subunit"/>
    <property type="evidence" value="ECO:0007669"/>
    <property type="project" value="TreeGrafter"/>
</dbReference>
<dbReference type="GO" id="GO:0019843">
    <property type="term" value="F:rRNA binding"/>
    <property type="evidence" value="ECO:0007669"/>
    <property type="project" value="UniProtKB-UniRule"/>
</dbReference>
<dbReference type="GO" id="GO:0003735">
    <property type="term" value="F:structural constituent of ribosome"/>
    <property type="evidence" value="ECO:0007669"/>
    <property type="project" value="InterPro"/>
</dbReference>
<dbReference type="GO" id="GO:0016740">
    <property type="term" value="F:transferase activity"/>
    <property type="evidence" value="ECO:0007669"/>
    <property type="project" value="InterPro"/>
</dbReference>
<dbReference type="GO" id="GO:0032543">
    <property type="term" value="P:mitochondrial translation"/>
    <property type="evidence" value="ECO:0007669"/>
    <property type="project" value="TreeGrafter"/>
</dbReference>
<dbReference type="FunFam" id="4.10.950.10:FF:000001">
    <property type="entry name" value="50S ribosomal protein L2"/>
    <property type="match status" value="1"/>
</dbReference>
<dbReference type="FunFam" id="2.30.30.30:FF:000008">
    <property type="entry name" value="50S ribosomal protein L2, chloroplastic"/>
    <property type="match status" value="1"/>
</dbReference>
<dbReference type="FunFam" id="2.40.50.140:FF:000029">
    <property type="entry name" value="50S ribosomal protein L2, chloroplastic"/>
    <property type="match status" value="1"/>
</dbReference>
<dbReference type="Gene3D" id="2.30.30.30">
    <property type="match status" value="1"/>
</dbReference>
<dbReference type="Gene3D" id="2.40.50.140">
    <property type="entry name" value="Nucleic acid-binding proteins"/>
    <property type="match status" value="1"/>
</dbReference>
<dbReference type="Gene3D" id="4.10.950.10">
    <property type="entry name" value="Ribosomal protein L2, domain 3"/>
    <property type="match status" value="1"/>
</dbReference>
<dbReference type="HAMAP" id="MF_01320_B">
    <property type="entry name" value="Ribosomal_uL2_B"/>
    <property type="match status" value="1"/>
</dbReference>
<dbReference type="InterPro" id="IPR012340">
    <property type="entry name" value="NA-bd_OB-fold"/>
</dbReference>
<dbReference type="InterPro" id="IPR014722">
    <property type="entry name" value="Rib_uL2_dom2"/>
</dbReference>
<dbReference type="InterPro" id="IPR002171">
    <property type="entry name" value="Ribosomal_uL2"/>
</dbReference>
<dbReference type="InterPro" id="IPR005880">
    <property type="entry name" value="Ribosomal_uL2_bac/org-type"/>
</dbReference>
<dbReference type="InterPro" id="IPR022669">
    <property type="entry name" value="Ribosomal_uL2_C"/>
</dbReference>
<dbReference type="InterPro" id="IPR022671">
    <property type="entry name" value="Ribosomal_uL2_CS"/>
</dbReference>
<dbReference type="InterPro" id="IPR014726">
    <property type="entry name" value="Ribosomal_uL2_dom3"/>
</dbReference>
<dbReference type="InterPro" id="IPR022666">
    <property type="entry name" value="Ribosomal_uL2_RNA-bd_dom"/>
</dbReference>
<dbReference type="InterPro" id="IPR008991">
    <property type="entry name" value="Translation_prot_SH3-like_sf"/>
</dbReference>
<dbReference type="NCBIfam" id="TIGR01171">
    <property type="entry name" value="rplB_bact"/>
    <property type="match status" value="1"/>
</dbReference>
<dbReference type="PANTHER" id="PTHR13691:SF5">
    <property type="entry name" value="LARGE RIBOSOMAL SUBUNIT PROTEIN UL2M"/>
    <property type="match status" value="1"/>
</dbReference>
<dbReference type="PANTHER" id="PTHR13691">
    <property type="entry name" value="RIBOSOMAL PROTEIN L2"/>
    <property type="match status" value="1"/>
</dbReference>
<dbReference type="Pfam" id="PF00181">
    <property type="entry name" value="Ribosomal_L2"/>
    <property type="match status" value="1"/>
</dbReference>
<dbReference type="Pfam" id="PF03947">
    <property type="entry name" value="Ribosomal_L2_C"/>
    <property type="match status" value="1"/>
</dbReference>
<dbReference type="PIRSF" id="PIRSF002158">
    <property type="entry name" value="Ribosomal_L2"/>
    <property type="match status" value="1"/>
</dbReference>
<dbReference type="SMART" id="SM01383">
    <property type="entry name" value="Ribosomal_L2"/>
    <property type="match status" value="1"/>
</dbReference>
<dbReference type="SMART" id="SM01382">
    <property type="entry name" value="Ribosomal_L2_C"/>
    <property type="match status" value="1"/>
</dbReference>
<dbReference type="SUPFAM" id="SSF50249">
    <property type="entry name" value="Nucleic acid-binding proteins"/>
    <property type="match status" value="1"/>
</dbReference>
<dbReference type="SUPFAM" id="SSF50104">
    <property type="entry name" value="Translation proteins SH3-like domain"/>
    <property type="match status" value="1"/>
</dbReference>
<dbReference type="PROSITE" id="PS00467">
    <property type="entry name" value="RIBOSOMAL_L2"/>
    <property type="match status" value="1"/>
</dbReference>
<geneLocation type="chloroplast"/>
<comment type="subunit">
    <text evidence="1">Part of the 50S ribosomal subunit.</text>
</comment>
<comment type="subcellular location">
    <subcellularLocation>
        <location>Plastid</location>
        <location>Chloroplast</location>
    </subcellularLocation>
</comment>
<comment type="similarity">
    <text evidence="4">Belongs to the universal ribosomal protein uL2 family.</text>
</comment>
<proteinExistence type="inferred from homology"/>
<gene>
    <name type="primary">rpl2-A</name>
</gene>
<gene>
    <name type="primary">rpl2-B</name>
</gene>
<protein>
    <recommendedName>
        <fullName evidence="2">Large ribosomal subunit protein uL2cz/uL2cy</fullName>
    </recommendedName>
    <alternativeName>
        <fullName evidence="4">50S ribosomal protein L2, chloroplastic</fullName>
    </alternativeName>
</protein>
<name>RK2_NICSY</name>
<sequence length="274" mass="30011">MAIHLYKTSTPSTRNGTVDSQVKSNPRNNLIYGQHHCGKGRNARGIITARHRGGGHKRLYRKIDFRRNEKDIYGRIVTIEYDPNRNAYICLIHYGDGEKRYILHPRGAIIGDTIVSGTEVPIKMGNALPLTDMPLGTAIHNIEITLGKGGQLARAAGAVAKLIAKEGKSATLKLPSGEVRLISKNCSATVGQVGNVGVNQKSLGRAGSKRWLGKRPVVRGVVMNPVDHPHGGGEGRAPIGRKKPTTPWGYPALGRRSRKRNKYSDNLILRRRSK</sequence>
<feature type="chain" id="PRO_0000237280" description="Large ribosomal subunit protein uL2cz/uL2cy">
    <location>
        <begin position="1"/>
        <end position="274"/>
    </location>
</feature>
<feature type="region of interest" description="Disordered" evidence="3">
    <location>
        <begin position="1"/>
        <end position="24"/>
    </location>
</feature>
<feature type="region of interest" description="Disordered" evidence="3">
    <location>
        <begin position="223"/>
        <end position="274"/>
    </location>
</feature>
<feature type="compositionally biased region" description="Polar residues" evidence="3">
    <location>
        <begin position="7"/>
        <end position="24"/>
    </location>
</feature>
<accession>Q3C1N6</accession>